<dbReference type="EC" id="3.1.26.4" evidence="1"/>
<dbReference type="EMBL" id="BX571856">
    <property type="protein sequence ID" value="CAG40222.1"/>
    <property type="molecule type" value="Genomic_DNA"/>
</dbReference>
<dbReference type="RefSeq" id="WP_000176401.1">
    <property type="nucleotide sequence ID" value="NC_002952.2"/>
</dbReference>
<dbReference type="SMR" id="Q6GHJ1"/>
<dbReference type="KEGG" id="sar:SAR1220"/>
<dbReference type="HOGENOM" id="CLU_036532_2_1_9"/>
<dbReference type="Proteomes" id="UP000000596">
    <property type="component" value="Chromosome"/>
</dbReference>
<dbReference type="GO" id="GO:0005737">
    <property type="term" value="C:cytoplasm"/>
    <property type="evidence" value="ECO:0007669"/>
    <property type="project" value="UniProtKB-SubCell"/>
</dbReference>
<dbReference type="GO" id="GO:0032299">
    <property type="term" value="C:ribonuclease H2 complex"/>
    <property type="evidence" value="ECO:0007669"/>
    <property type="project" value="TreeGrafter"/>
</dbReference>
<dbReference type="GO" id="GO:0030145">
    <property type="term" value="F:manganese ion binding"/>
    <property type="evidence" value="ECO:0007669"/>
    <property type="project" value="UniProtKB-UniRule"/>
</dbReference>
<dbReference type="GO" id="GO:0003723">
    <property type="term" value="F:RNA binding"/>
    <property type="evidence" value="ECO:0007669"/>
    <property type="project" value="InterPro"/>
</dbReference>
<dbReference type="GO" id="GO:0004523">
    <property type="term" value="F:RNA-DNA hybrid ribonuclease activity"/>
    <property type="evidence" value="ECO:0007669"/>
    <property type="project" value="UniProtKB-UniRule"/>
</dbReference>
<dbReference type="GO" id="GO:0043137">
    <property type="term" value="P:DNA replication, removal of RNA primer"/>
    <property type="evidence" value="ECO:0007669"/>
    <property type="project" value="TreeGrafter"/>
</dbReference>
<dbReference type="GO" id="GO:0006298">
    <property type="term" value="P:mismatch repair"/>
    <property type="evidence" value="ECO:0007669"/>
    <property type="project" value="TreeGrafter"/>
</dbReference>
<dbReference type="CDD" id="cd07182">
    <property type="entry name" value="RNase_HII_bacteria_HII_like"/>
    <property type="match status" value="1"/>
</dbReference>
<dbReference type="FunFam" id="3.30.420.10:FF:000006">
    <property type="entry name" value="Ribonuclease HII"/>
    <property type="match status" value="1"/>
</dbReference>
<dbReference type="Gene3D" id="3.30.420.10">
    <property type="entry name" value="Ribonuclease H-like superfamily/Ribonuclease H"/>
    <property type="match status" value="1"/>
</dbReference>
<dbReference type="HAMAP" id="MF_00052_B">
    <property type="entry name" value="RNase_HII_B"/>
    <property type="match status" value="1"/>
</dbReference>
<dbReference type="InterPro" id="IPR022898">
    <property type="entry name" value="RNase_HII"/>
</dbReference>
<dbReference type="InterPro" id="IPR001352">
    <property type="entry name" value="RNase_HII/HIII"/>
</dbReference>
<dbReference type="InterPro" id="IPR024567">
    <property type="entry name" value="RNase_HII/HIII_dom"/>
</dbReference>
<dbReference type="InterPro" id="IPR012337">
    <property type="entry name" value="RNaseH-like_sf"/>
</dbReference>
<dbReference type="InterPro" id="IPR036397">
    <property type="entry name" value="RNaseH_sf"/>
</dbReference>
<dbReference type="NCBIfam" id="NF000594">
    <property type="entry name" value="PRK00015.1-1"/>
    <property type="match status" value="1"/>
</dbReference>
<dbReference type="NCBIfam" id="NF000595">
    <property type="entry name" value="PRK00015.1-3"/>
    <property type="match status" value="1"/>
</dbReference>
<dbReference type="PANTHER" id="PTHR10954">
    <property type="entry name" value="RIBONUCLEASE H2 SUBUNIT A"/>
    <property type="match status" value="1"/>
</dbReference>
<dbReference type="PANTHER" id="PTHR10954:SF18">
    <property type="entry name" value="RIBONUCLEASE HII"/>
    <property type="match status" value="1"/>
</dbReference>
<dbReference type="Pfam" id="PF01351">
    <property type="entry name" value="RNase_HII"/>
    <property type="match status" value="1"/>
</dbReference>
<dbReference type="SUPFAM" id="SSF53098">
    <property type="entry name" value="Ribonuclease H-like"/>
    <property type="match status" value="1"/>
</dbReference>
<dbReference type="PROSITE" id="PS51975">
    <property type="entry name" value="RNASE_H_2"/>
    <property type="match status" value="1"/>
</dbReference>
<evidence type="ECO:0000255" key="1">
    <source>
        <dbReference type="HAMAP-Rule" id="MF_00052"/>
    </source>
</evidence>
<evidence type="ECO:0000255" key="2">
    <source>
        <dbReference type="PROSITE-ProRule" id="PRU01319"/>
    </source>
</evidence>
<name>RNH2_STAAR</name>
<accession>Q6GHJ1</accession>
<gene>
    <name evidence="1" type="primary">rnhB</name>
    <name type="synonym">rnh</name>
    <name type="ordered locus">SAR1220</name>
</gene>
<proteinExistence type="inferred from homology"/>
<sequence>MTLTIKEVTQLINAVNTIEELENHECFLDERKGVQNAIARRRKALEKEQALKEKYVEMTYFENEILTENPNAIICGIDEVGRGPLAGPVVACATILNSNHNYLGLDDSKKVPVTKRLELNEALKNEVTAFAYGIATAEEIDEFNIYKATQIAMQRAIDGLSVQPTHLLIDAMTLDNALPQVSLIKGDARSVSIAAASIMAKVFRDDYMTQLSKDYPEYGFEKNAGYGTKQHLLAIDDIGIMKEHRKSFEPIKSLL</sequence>
<feature type="chain" id="PRO_0000111624" description="Ribonuclease HII">
    <location>
        <begin position="1"/>
        <end position="255"/>
    </location>
</feature>
<feature type="domain" description="RNase H type-2" evidence="2">
    <location>
        <begin position="72"/>
        <end position="255"/>
    </location>
</feature>
<feature type="binding site" evidence="1">
    <location>
        <position position="78"/>
    </location>
    <ligand>
        <name>a divalent metal cation</name>
        <dbReference type="ChEBI" id="CHEBI:60240"/>
    </ligand>
</feature>
<feature type="binding site" evidence="1">
    <location>
        <position position="79"/>
    </location>
    <ligand>
        <name>a divalent metal cation</name>
        <dbReference type="ChEBI" id="CHEBI:60240"/>
    </ligand>
</feature>
<feature type="binding site" evidence="1">
    <location>
        <position position="170"/>
    </location>
    <ligand>
        <name>a divalent metal cation</name>
        <dbReference type="ChEBI" id="CHEBI:60240"/>
    </ligand>
</feature>
<keyword id="KW-0963">Cytoplasm</keyword>
<keyword id="KW-0255">Endonuclease</keyword>
<keyword id="KW-0378">Hydrolase</keyword>
<keyword id="KW-0464">Manganese</keyword>
<keyword id="KW-0479">Metal-binding</keyword>
<keyword id="KW-0540">Nuclease</keyword>
<reference key="1">
    <citation type="journal article" date="2004" name="Proc. Natl. Acad. Sci. U.S.A.">
        <title>Complete genomes of two clinical Staphylococcus aureus strains: evidence for the rapid evolution of virulence and drug resistance.</title>
        <authorList>
            <person name="Holden M.T.G."/>
            <person name="Feil E.J."/>
            <person name="Lindsay J.A."/>
            <person name="Peacock S.J."/>
            <person name="Day N.P.J."/>
            <person name="Enright M.C."/>
            <person name="Foster T.J."/>
            <person name="Moore C.E."/>
            <person name="Hurst L."/>
            <person name="Atkin R."/>
            <person name="Barron A."/>
            <person name="Bason N."/>
            <person name="Bentley S.D."/>
            <person name="Chillingworth C."/>
            <person name="Chillingworth T."/>
            <person name="Churcher C."/>
            <person name="Clark L."/>
            <person name="Corton C."/>
            <person name="Cronin A."/>
            <person name="Doggett J."/>
            <person name="Dowd L."/>
            <person name="Feltwell T."/>
            <person name="Hance Z."/>
            <person name="Harris B."/>
            <person name="Hauser H."/>
            <person name="Holroyd S."/>
            <person name="Jagels K."/>
            <person name="James K.D."/>
            <person name="Lennard N."/>
            <person name="Line A."/>
            <person name="Mayes R."/>
            <person name="Moule S."/>
            <person name="Mungall K."/>
            <person name="Ormond D."/>
            <person name="Quail M.A."/>
            <person name="Rabbinowitsch E."/>
            <person name="Rutherford K.M."/>
            <person name="Sanders M."/>
            <person name="Sharp S."/>
            <person name="Simmonds M."/>
            <person name="Stevens K."/>
            <person name="Whitehead S."/>
            <person name="Barrell B.G."/>
            <person name="Spratt B.G."/>
            <person name="Parkhill J."/>
        </authorList>
    </citation>
    <scope>NUCLEOTIDE SEQUENCE [LARGE SCALE GENOMIC DNA]</scope>
    <source>
        <strain>MRSA252</strain>
    </source>
</reference>
<comment type="function">
    <text evidence="1">Endonuclease that specifically degrades the RNA of RNA-DNA hybrids.</text>
</comment>
<comment type="catalytic activity">
    <reaction evidence="1">
        <text>Endonucleolytic cleavage to 5'-phosphomonoester.</text>
        <dbReference type="EC" id="3.1.26.4"/>
    </reaction>
</comment>
<comment type="cofactor">
    <cofactor evidence="1">
        <name>Mn(2+)</name>
        <dbReference type="ChEBI" id="CHEBI:29035"/>
    </cofactor>
    <cofactor evidence="1">
        <name>Mg(2+)</name>
        <dbReference type="ChEBI" id="CHEBI:18420"/>
    </cofactor>
    <text evidence="1">Manganese or magnesium. Binds 1 divalent metal ion per monomer in the absence of substrate. May bind a second metal ion after substrate binding.</text>
</comment>
<comment type="subcellular location">
    <subcellularLocation>
        <location evidence="1">Cytoplasm</location>
    </subcellularLocation>
</comment>
<comment type="similarity">
    <text evidence="1">Belongs to the RNase HII family.</text>
</comment>
<protein>
    <recommendedName>
        <fullName evidence="1">Ribonuclease HII</fullName>
        <shortName evidence="1">RNase HII</shortName>
        <ecNumber evidence="1">3.1.26.4</ecNumber>
    </recommendedName>
</protein>
<organism>
    <name type="scientific">Staphylococcus aureus (strain MRSA252)</name>
    <dbReference type="NCBI Taxonomy" id="282458"/>
    <lineage>
        <taxon>Bacteria</taxon>
        <taxon>Bacillati</taxon>
        <taxon>Bacillota</taxon>
        <taxon>Bacilli</taxon>
        <taxon>Bacillales</taxon>
        <taxon>Staphylococcaceae</taxon>
        <taxon>Staphylococcus</taxon>
    </lineage>
</organism>